<comment type="function">
    <text evidence="1">Allows the formation of correctly charged Asn-tRNA(Asn) or Gln-tRNA(Gln) through the transamidation of misacylated Asp-tRNA(Asn) or Glu-tRNA(Gln) in organisms which lack either or both of asparaginyl-tRNA or glutaminyl-tRNA synthetases. The reaction takes place in the presence of glutamine and ATP through an activated phospho-Asp-tRNA(Asn) or phospho-Glu-tRNA(Gln).</text>
</comment>
<comment type="catalytic activity">
    <reaction evidence="1">
        <text>L-glutamyl-tRNA(Gln) + L-glutamine + ATP + H2O = L-glutaminyl-tRNA(Gln) + L-glutamate + ADP + phosphate + H(+)</text>
        <dbReference type="Rhea" id="RHEA:17521"/>
        <dbReference type="Rhea" id="RHEA-COMP:9681"/>
        <dbReference type="Rhea" id="RHEA-COMP:9684"/>
        <dbReference type="ChEBI" id="CHEBI:15377"/>
        <dbReference type="ChEBI" id="CHEBI:15378"/>
        <dbReference type="ChEBI" id="CHEBI:29985"/>
        <dbReference type="ChEBI" id="CHEBI:30616"/>
        <dbReference type="ChEBI" id="CHEBI:43474"/>
        <dbReference type="ChEBI" id="CHEBI:58359"/>
        <dbReference type="ChEBI" id="CHEBI:78520"/>
        <dbReference type="ChEBI" id="CHEBI:78521"/>
        <dbReference type="ChEBI" id="CHEBI:456216"/>
    </reaction>
</comment>
<comment type="catalytic activity">
    <reaction evidence="1">
        <text>L-aspartyl-tRNA(Asn) + L-glutamine + ATP + H2O = L-asparaginyl-tRNA(Asn) + L-glutamate + ADP + phosphate + 2 H(+)</text>
        <dbReference type="Rhea" id="RHEA:14513"/>
        <dbReference type="Rhea" id="RHEA-COMP:9674"/>
        <dbReference type="Rhea" id="RHEA-COMP:9677"/>
        <dbReference type="ChEBI" id="CHEBI:15377"/>
        <dbReference type="ChEBI" id="CHEBI:15378"/>
        <dbReference type="ChEBI" id="CHEBI:29985"/>
        <dbReference type="ChEBI" id="CHEBI:30616"/>
        <dbReference type="ChEBI" id="CHEBI:43474"/>
        <dbReference type="ChEBI" id="CHEBI:58359"/>
        <dbReference type="ChEBI" id="CHEBI:78515"/>
        <dbReference type="ChEBI" id="CHEBI:78516"/>
        <dbReference type="ChEBI" id="CHEBI:456216"/>
    </reaction>
</comment>
<comment type="subunit">
    <text evidence="1">Heterotrimer of A, B and C subunits.</text>
</comment>
<comment type="similarity">
    <text evidence="1">Belongs to the GatC family.</text>
</comment>
<sequence length="99" mass="10487">MSAISRSEVEHLARLARIDMTDEELDRMAGQLDAVLDAVAQVASVVTDDVPATSHPVPLTNVTRPDVVRPGLTAEEALAGAPASEDGRFRVPQILGEEA</sequence>
<accession>A6W7L6</accession>
<keyword id="KW-0067">ATP-binding</keyword>
<keyword id="KW-0436">Ligase</keyword>
<keyword id="KW-0547">Nucleotide-binding</keyword>
<keyword id="KW-0648">Protein biosynthesis</keyword>
<keyword id="KW-1185">Reference proteome</keyword>
<protein>
    <recommendedName>
        <fullName evidence="1">Aspartyl/glutamyl-tRNA(Asn/Gln) amidotransferase subunit C</fullName>
        <shortName evidence="1">Asp/Glu-ADT subunit C</shortName>
        <ecNumber evidence="1">6.3.5.-</ecNumber>
    </recommendedName>
</protein>
<organism>
    <name type="scientific">Kineococcus radiotolerans (strain ATCC BAA-149 / DSM 14245 / SRS30216)</name>
    <dbReference type="NCBI Taxonomy" id="266940"/>
    <lineage>
        <taxon>Bacteria</taxon>
        <taxon>Bacillati</taxon>
        <taxon>Actinomycetota</taxon>
        <taxon>Actinomycetes</taxon>
        <taxon>Kineosporiales</taxon>
        <taxon>Kineosporiaceae</taxon>
        <taxon>Kineococcus</taxon>
    </lineage>
</organism>
<gene>
    <name evidence="1" type="primary">gatC</name>
    <name type="ordered locus">Krad_1317</name>
</gene>
<feature type="chain" id="PRO_1000076185" description="Aspartyl/glutamyl-tRNA(Asn/Gln) amidotransferase subunit C">
    <location>
        <begin position="1"/>
        <end position="99"/>
    </location>
</feature>
<reference key="1">
    <citation type="journal article" date="2008" name="PLoS ONE">
        <title>Survival in nuclear waste, extreme resistance, and potential applications gleaned from the genome sequence of Kineococcus radiotolerans SRS30216.</title>
        <authorList>
            <person name="Bagwell C.E."/>
            <person name="Bhat S."/>
            <person name="Hawkins G.M."/>
            <person name="Smith B.W."/>
            <person name="Biswas T."/>
            <person name="Hoover T.R."/>
            <person name="Saunders E."/>
            <person name="Han C.S."/>
            <person name="Tsodikov O.V."/>
            <person name="Shimkets L.J."/>
        </authorList>
    </citation>
    <scope>NUCLEOTIDE SEQUENCE [LARGE SCALE GENOMIC DNA]</scope>
    <source>
        <strain>ATCC BAA-149 / DSM 14245 / SRS30216</strain>
    </source>
</reference>
<name>GATC_KINRD</name>
<dbReference type="EC" id="6.3.5.-" evidence="1"/>
<dbReference type="EMBL" id="CP000750">
    <property type="protein sequence ID" value="ABS02805.1"/>
    <property type="molecule type" value="Genomic_DNA"/>
</dbReference>
<dbReference type="RefSeq" id="WP_012084339.1">
    <property type="nucleotide sequence ID" value="NC_009664.2"/>
</dbReference>
<dbReference type="SMR" id="A6W7L6"/>
<dbReference type="STRING" id="266940.Krad_1317"/>
<dbReference type="KEGG" id="kra:Krad_1317"/>
<dbReference type="eggNOG" id="COG0721">
    <property type="taxonomic scope" value="Bacteria"/>
</dbReference>
<dbReference type="HOGENOM" id="CLU_105899_1_0_11"/>
<dbReference type="OrthoDB" id="5295223at2"/>
<dbReference type="Proteomes" id="UP000001116">
    <property type="component" value="Chromosome"/>
</dbReference>
<dbReference type="GO" id="GO:0050566">
    <property type="term" value="F:asparaginyl-tRNA synthase (glutamine-hydrolyzing) activity"/>
    <property type="evidence" value="ECO:0007669"/>
    <property type="project" value="RHEA"/>
</dbReference>
<dbReference type="GO" id="GO:0005524">
    <property type="term" value="F:ATP binding"/>
    <property type="evidence" value="ECO:0007669"/>
    <property type="project" value="UniProtKB-KW"/>
</dbReference>
<dbReference type="GO" id="GO:0050567">
    <property type="term" value="F:glutaminyl-tRNA synthase (glutamine-hydrolyzing) activity"/>
    <property type="evidence" value="ECO:0007669"/>
    <property type="project" value="UniProtKB-UniRule"/>
</dbReference>
<dbReference type="GO" id="GO:0070681">
    <property type="term" value="P:glutaminyl-tRNAGln biosynthesis via transamidation"/>
    <property type="evidence" value="ECO:0007669"/>
    <property type="project" value="TreeGrafter"/>
</dbReference>
<dbReference type="GO" id="GO:0006450">
    <property type="term" value="P:regulation of translational fidelity"/>
    <property type="evidence" value="ECO:0007669"/>
    <property type="project" value="InterPro"/>
</dbReference>
<dbReference type="GO" id="GO:0006412">
    <property type="term" value="P:translation"/>
    <property type="evidence" value="ECO:0007669"/>
    <property type="project" value="UniProtKB-UniRule"/>
</dbReference>
<dbReference type="Gene3D" id="1.10.20.60">
    <property type="entry name" value="Glu-tRNAGln amidotransferase C subunit, N-terminal domain"/>
    <property type="match status" value="1"/>
</dbReference>
<dbReference type="HAMAP" id="MF_00122">
    <property type="entry name" value="GatC"/>
    <property type="match status" value="1"/>
</dbReference>
<dbReference type="InterPro" id="IPR036113">
    <property type="entry name" value="Asp/Glu-ADT_sf_sub_c"/>
</dbReference>
<dbReference type="InterPro" id="IPR003837">
    <property type="entry name" value="GatC"/>
</dbReference>
<dbReference type="NCBIfam" id="TIGR00135">
    <property type="entry name" value="gatC"/>
    <property type="match status" value="1"/>
</dbReference>
<dbReference type="PANTHER" id="PTHR15004">
    <property type="entry name" value="GLUTAMYL-TRNA(GLN) AMIDOTRANSFERASE SUBUNIT C, MITOCHONDRIAL"/>
    <property type="match status" value="1"/>
</dbReference>
<dbReference type="PANTHER" id="PTHR15004:SF0">
    <property type="entry name" value="GLUTAMYL-TRNA(GLN) AMIDOTRANSFERASE SUBUNIT C, MITOCHONDRIAL"/>
    <property type="match status" value="1"/>
</dbReference>
<dbReference type="Pfam" id="PF02686">
    <property type="entry name" value="GatC"/>
    <property type="match status" value="1"/>
</dbReference>
<dbReference type="SUPFAM" id="SSF141000">
    <property type="entry name" value="Glu-tRNAGln amidotransferase C subunit"/>
    <property type="match status" value="1"/>
</dbReference>
<proteinExistence type="inferred from homology"/>
<evidence type="ECO:0000255" key="1">
    <source>
        <dbReference type="HAMAP-Rule" id="MF_00122"/>
    </source>
</evidence>